<protein>
    <recommendedName>
        <fullName>T-cell surface glycoprotein CD3 delta chain</fullName>
    </recommendedName>
    <alternativeName>
        <fullName>T-cell receptor T3 delta chain</fullName>
    </alternativeName>
    <cdAntigenName>CD3d</cdAntigenName>
</protein>
<comment type="function">
    <text evidence="2">Part of the TCR-CD3 complex present on T-lymphocyte cell surface that plays an essential role in adaptive immune response. When antigen presenting cells (APCs) activate T-cell receptor (TCR), TCR-mediated signals are transmitted across the cell membrane by the CD3 chains CD3D, CD3E, CD3G and CD3Z. All CD3 chains contain immunoreceptor tyrosine-based activation motifs (ITAMs) in their cytoplasmic domain. Upon TCR engagement, these motifs become phosphorylated by Src family protein tyrosine kinases LCK and FYN, resulting in the activation of downstream signaling pathways. In addition of this role of signal transduction in T-cell activation, CD3D plays an essential role in thymocyte differentiation. Indeed, participates in correct intracellular TCR-CD3 complex assembly and surface expression. In absence of a functional TCR-CD3 complex, thymocytes are unable to differentiate properly. Interacts with CD4 and CD8 and thus serves to establish a functional link between the TCR and coreceptors CD4 and CD8, which is needed for activation and positive selection of CD4 or CD8 T-cells.</text>
</comment>
<comment type="subunit">
    <text evidence="2">The TCR-CD3 complex is composed of a CD3D/CD3E and a CD3G/CD3E heterodimers that preferentially associate with TCRalpha and TCRbeta, respectively, to form TCRalpha/CD3E/CD3G and TCRbeta/CD3G/CD3E trimers. In turn, the hexamer interacts with CD3Z homodimer to form the TCR-CD3 complex. Alternatively, TCRalpha and TCRbeta can be replaced by TCRgamma and TCRdelta. Interacts with coreceptors CD4 and CD8.</text>
</comment>
<comment type="subcellular location">
    <subcellularLocation>
        <location evidence="2">Cell membrane</location>
        <topology evidence="2">Single-pass type I membrane protein</topology>
    </subcellularLocation>
</comment>
<comment type="tissue specificity">
    <text evidence="2">CD3D is mostly present on T-lymphocytes with its TCR-CD3 partners. Present also in fetal NK-cells.</text>
</comment>
<comment type="PTM">
    <text evidence="2">Phosphorylated on Tyr residues after T-cell receptor triggering by LCK in association with CD4/CD8.</text>
</comment>
<proteinExistence type="evidence at transcript level"/>
<keyword id="KW-1064">Adaptive immunity</keyword>
<keyword id="KW-1003">Cell membrane</keyword>
<keyword id="KW-1015">Disulfide bond</keyword>
<keyword id="KW-0325">Glycoprotein</keyword>
<keyword id="KW-0391">Immunity</keyword>
<keyword id="KW-0472">Membrane</keyword>
<keyword id="KW-0597">Phosphoprotein</keyword>
<keyword id="KW-0675">Receptor</keyword>
<keyword id="KW-1185">Reference proteome</keyword>
<keyword id="KW-0732">Signal</keyword>
<keyword id="KW-0812">Transmembrane</keyword>
<keyword id="KW-1133">Transmembrane helix</keyword>
<organism>
    <name type="scientific">Sus scrofa</name>
    <name type="common">Pig</name>
    <dbReference type="NCBI Taxonomy" id="9823"/>
    <lineage>
        <taxon>Eukaryota</taxon>
        <taxon>Metazoa</taxon>
        <taxon>Chordata</taxon>
        <taxon>Craniata</taxon>
        <taxon>Vertebrata</taxon>
        <taxon>Euteleostomi</taxon>
        <taxon>Mammalia</taxon>
        <taxon>Eutheria</taxon>
        <taxon>Laurasiatheria</taxon>
        <taxon>Artiodactyla</taxon>
        <taxon>Suina</taxon>
        <taxon>Suidae</taxon>
        <taxon>Sus</taxon>
    </lineage>
</organism>
<sequence>MEHSRFLSGLILAAFLSRVSPYEVEMEELEDKVFVSCNTSIIWLQGTEGELLSDKKIDLGKRILDPRGLYKCNAPKEQDSNSKIFLQVYYRMCQNCVELDSATLAGIIVTDIIATLLLALGVYCFAGHEMGRFSRAADTQDLLRNDQLYQPLRDRNDGQYSRLGENWARNK</sequence>
<name>CD3D_PIG</name>
<feature type="signal peptide" evidence="3">
    <location>
        <begin position="1"/>
        <end position="21"/>
    </location>
</feature>
<feature type="chain" id="PRO_0000016490" description="T-cell surface glycoprotein CD3 delta chain">
    <location>
        <begin position="22"/>
        <end position="171"/>
    </location>
</feature>
<feature type="topological domain" description="Extracellular" evidence="3">
    <location>
        <begin position="22"/>
        <end position="104"/>
    </location>
</feature>
<feature type="transmembrane region" description="Helical" evidence="3">
    <location>
        <begin position="105"/>
        <end position="125"/>
    </location>
</feature>
<feature type="topological domain" description="Cytoplasmic" evidence="3">
    <location>
        <begin position="126"/>
        <end position="171"/>
    </location>
</feature>
<feature type="domain" description="ITAM" evidence="4">
    <location>
        <begin position="138"/>
        <end position="166"/>
    </location>
</feature>
<feature type="modified residue" description="Phosphotyrosine" evidence="2 4">
    <location>
        <position position="149"/>
    </location>
</feature>
<feature type="modified residue" description="Phosphotyrosine" evidence="2 4">
    <location>
        <position position="160"/>
    </location>
</feature>
<feature type="glycosylation site" description="N-linked (GlcNAc...) asparagine" evidence="3">
    <location>
        <position position="38"/>
    </location>
</feature>
<feature type="disulfide bond" evidence="1">
    <location>
        <begin position="37"/>
        <end position="72"/>
    </location>
</feature>
<accession>Q764N2</accession>
<reference key="1">
    <citation type="submission" date="2004-11" db="EMBL/GenBank/DDBJ databases">
        <title>Structural differences between the CD3 molecules expressed at the surface of alpha beta- and gamma delta-T cells revealed by monoclonal antibodies.</title>
        <authorList>
            <person name="Yang H."/>
            <person name="Wileman T."/>
        </authorList>
    </citation>
    <scope>NUCLEOTIDE SEQUENCE [MRNA]</scope>
</reference>
<reference key="2">
    <citation type="journal article" date="2004" name="Nucleic Acids Res.">
        <title>PEDE (Pig EST Data Explorer): construction of a database for ESTs derived from porcine full-length cDNA libraries.</title>
        <authorList>
            <person name="Uenishi H."/>
            <person name="Eguchi T."/>
            <person name="Suzuki K."/>
            <person name="Sawazaki T."/>
            <person name="Toki D."/>
            <person name="Shinkai H."/>
            <person name="Okumura N."/>
            <person name="Hamasima N."/>
            <person name="Awata T."/>
        </authorList>
    </citation>
    <scope>NUCLEOTIDE SEQUENCE [LARGE SCALE MRNA]</scope>
</reference>
<evidence type="ECO:0000250" key="1"/>
<evidence type="ECO:0000250" key="2">
    <source>
        <dbReference type="UniProtKB" id="P04234"/>
    </source>
</evidence>
<evidence type="ECO:0000255" key="3"/>
<evidence type="ECO:0000255" key="4">
    <source>
        <dbReference type="PROSITE-ProRule" id="PRU00379"/>
    </source>
</evidence>
<gene>
    <name type="primary">CD3D</name>
</gene>
<dbReference type="EMBL" id="AY823637">
    <property type="protein sequence ID" value="AAV80703.1"/>
    <property type="molecule type" value="mRNA"/>
</dbReference>
<dbReference type="EMBL" id="AB116557">
    <property type="protein sequence ID" value="BAD06311.1"/>
    <property type="molecule type" value="mRNA"/>
</dbReference>
<dbReference type="RefSeq" id="NP_998940.1">
    <property type="nucleotide sequence ID" value="NM_213775.2"/>
</dbReference>
<dbReference type="SMR" id="Q764N2"/>
<dbReference type="FunCoup" id="Q764N2">
    <property type="interactions" value="466"/>
</dbReference>
<dbReference type="IntAct" id="Q764N2">
    <property type="interactions" value="1"/>
</dbReference>
<dbReference type="STRING" id="9823.ENSSSCP00000028968"/>
<dbReference type="GlyCosmos" id="Q764N2">
    <property type="glycosylation" value="1 site, No reported glycans"/>
</dbReference>
<dbReference type="GlyGen" id="Q764N2">
    <property type="glycosylation" value="1 site"/>
</dbReference>
<dbReference type="PaxDb" id="9823-ENSSSCP00000028968"/>
<dbReference type="Ensembl" id="ENSSSCT00000034310.4">
    <property type="protein sequence ID" value="ENSSSCP00000028968.1"/>
    <property type="gene ID" value="ENSSSCG00000015093.6"/>
</dbReference>
<dbReference type="Ensembl" id="ENSSSCT00015012707.1">
    <property type="protein sequence ID" value="ENSSSCP00015004916.1"/>
    <property type="gene ID" value="ENSSSCG00015009364.1"/>
</dbReference>
<dbReference type="Ensembl" id="ENSSSCT00025011684.1">
    <property type="protein sequence ID" value="ENSSSCP00025004656.1"/>
    <property type="gene ID" value="ENSSSCG00025008789.1"/>
</dbReference>
<dbReference type="Ensembl" id="ENSSSCT00035045679.1">
    <property type="protein sequence ID" value="ENSSSCP00035018253.1"/>
    <property type="gene ID" value="ENSSSCG00035034468.1"/>
</dbReference>
<dbReference type="Ensembl" id="ENSSSCT00045026960.1">
    <property type="protein sequence ID" value="ENSSSCP00045018630.1"/>
    <property type="gene ID" value="ENSSSCG00045015841.1"/>
</dbReference>
<dbReference type="Ensembl" id="ENSSSCT00055038230.1">
    <property type="protein sequence ID" value="ENSSSCP00055030370.1"/>
    <property type="gene ID" value="ENSSSCG00055019519.1"/>
</dbReference>
<dbReference type="Ensembl" id="ENSSSCT00060008949.1">
    <property type="protein sequence ID" value="ENSSSCP00060003275.1"/>
    <property type="gene ID" value="ENSSSCG00060007000.1"/>
</dbReference>
<dbReference type="Ensembl" id="ENSSSCT00070006786.1">
    <property type="protein sequence ID" value="ENSSSCP00070005535.1"/>
    <property type="gene ID" value="ENSSSCG00070003612.1"/>
</dbReference>
<dbReference type="Ensembl" id="ENSSSCT00085034810">
    <property type="protein sequence ID" value="ENSSSCP00085023787"/>
    <property type="gene ID" value="ENSSSCG00085018412"/>
</dbReference>
<dbReference type="Ensembl" id="ENSSSCT00090042759">
    <property type="protein sequence ID" value="ENSSSCP00090026663"/>
    <property type="gene ID" value="ENSSSCG00090024127"/>
</dbReference>
<dbReference type="Ensembl" id="ENSSSCT00105015200">
    <property type="protein sequence ID" value="ENSSSCP00105010947"/>
    <property type="gene ID" value="ENSSSCG00105007584"/>
</dbReference>
<dbReference type="Ensembl" id="ENSSSCT00110050815">
    <property type="protein sequence ID" value="ENSSSCP00110035585"/>
    <property type="gene ID" value="ENSSSCG00110026383"/>
</dbReference>
<dbReference type="Ensembl" id="ENSSSCT00115018940">
    <property type="protein sequence ID" value="ENSSSCP00115017910"/>
    <property type="gene ID" value="ENSSSCG00115010941"/>
</dbReference>
<dbReference type="Ensembl" id="ENSSSCT00130055441">
    <property type="protein sequence ID" value="ENSSSCP00130039728"/>
    <property type="gene ID" value="ENSSSCG00130028343"/>
</dbReference>
<dbReference type="GeneID" id="396661"/>
<dbReference type="KEGG" id="ssc:396661"/>
<dbReference type="CTD" id="915"/>
<dbReference type="VGNC" id="VGNC:86413">
    <property type="gene designation" value="CD3D"/>
</dbReference>
<dbReference type="eggNOG" id="ENOG502S4XC">
    <property type="taxonomic scope" value="Eukaryota"/>
</dbReference>
<dbReference type="GeneTree" id="ENSGT00940000153312"/>
<dbReference type="HOGENOM" id="CLU_115449_0_0_1"/>
<dbReference type="InParanoid" id="Q764N2"/>
<dbReference type="OMA" id="YQPLRDH"/>
<dbReference type="OrthoDB" id="8941324at2759"/>
<dbReference type="TreeFam" id="TF335892"/>
<dbReference type="Reactome" id="R-SSC-198933">
    <property type="pathway name" value="Immunoregulatory interactions between a Lymphoid and a non-Lymphoid cell"/>
</dbReference>
<dbReference type="Reactome" id="R-SSC-202424">
    <property type="pathway name" value="Downstream TCR signaling"/>
</dbReference>
<dbReference type="Reactome" id="R-SSC-202427">
    <property type="pathway name" value="Phosphorylation of CD3 and TCR zeta chains"/>
</dbReference>
<dbReference type="Reactome" id="R-SSC-202430">
    <property type="pathway name" value="Translocation of ZAP-70 to Immunological synapse"/>
</dbReference>
<dbReference type="Reactome" id="R-SSC-202433">
    <property type="pathway name" value="Generation of second messenger molecules"/>
</dbReference>
<dbReference type="Reactome" id="R-SSC-389948">
    <property type="pathway name" value="Co-inhibition by PD-1"/>
</dbReference>
<dbReference type="Reactome" id="R-SSC-8856825">
    <property type="pathway name" value="Cargo recognition for clathrin-mediated endocytosis"/>
</dbReference>
<dbReference type="Reactome" id="R-SSC-8856828">
    <property type="pathway name" value="Clathrin-mediated endocytosis"/>
</dbReference>
<dbReference type="Proteomes" id="UP000008227">
    <property type="component" value="Chromosome 9"/>
</dbReference>
<dbReference type="Proteomes" id="UP000314985">
    <property type="component" value="Chromosome 9"/>
</dbReference>
<dbReference type="Proteomes" id="UP000694570">
    <property type="component" value="Unplaced"/>
</dbReference>
<dbReference type="Proteomes" id="UP000694571">
    <property type="component" value="Unplaced"/>
</dbReference>
<dbReference type="Proteomes" id="UP000694720">
    <property type="component" value="Unplaced"/>
</dbReference>
<dbReference type="Proteomes" id="UP000694722">
    <property type="component" value="Unplaced"/>
</dbReference>
<dbReference type="Proteomes" id="UP000694723">
    <property type="component" value="Unplaced"/>
</dbReference>
<dbReference type="Proteomes" id="UP000694724">
    <property type="component" value="Unplaced"/>
</dbReference>
<dbReference type="Proteomes" id="UP000694725">
    <property type="component" value="Unplaced"/>
</dbReference>
<dbReference type="Proteomes" id="UP000694726">
    <property type="component" value="Unplaced"/>
</dbReference>
<dbReference type="Proteomes" id="UP000694727">
    <property type="component" value="Unplaced"/>
</dbReference>
<dbReference type="Proteomes" id="UP000694728">
    <property type="component" value="Unplaced"/>
</dbReference>
<dbReference type="Bgee" id="ENSSSCG00000015093">
    <property type="expression patterns" value="Expressed in blood and 24 other cell types or tissues"/>
</dbReference>
<dbReference type="ExpressionAtlas" id="Q764N2">
    <property type="expression patterns" value="baseline and differential"/>
</dbReference>
<dbReference type="GO" id="GO:0042105">
    <property type="term" value="C:alpha-beta T cell receptor complex"/>
    <property type="evidence" value="ECO:0000318"/>
    <property type="project" value="GO_Central"/>
</dbReference>
<dbReference type="GO" id="GO:0009897">
    <property type="term" value="C:external side of plasma membrane"/>
    <property type="evidence" value="ECO:0000318"/>
    <property type="project" value="GO_Central"/>
</dbReference>
<dbReference type="GO" id="GO:0042802">
    <property type="term" value="F:identical protein binding"/>
    <property type="evidence" value="ECO:0007669"/>
    <property type="project" value="Ensembl"/>
</dbReference>
<dbReference type="GO" id="GO:0004888">
    <property type="term" value="F:transmembrane signaling receptor activity"/>
    <property type="evidence" value="ECO:0000318"/>
    <property type="project" value="GO_Central"/>
</dbReference>
<dbReference type="GO" id="GO:0002250">
    <property type="term" value="P:adaptive immune response"/>
    <property type="evidence" value="ECO:0007669"/>
    <property type="project" value="UniProtKB-KW"/>
</dbReference>
<dbReference type="GO" id="GO:0007166">
    <property type="term" value="P:cell surface receptor signaling pathway"/>
    <property type="evidence" value="ECO:0000318"/>
    <property type="project" value="GO_Central"/>
</dbReference>
<dbReference type="GO" id="GO:0045059">
    <property type="term" value="P:positive thymic T cell selection"/>
    <property type="evidence" value="ECO:0000318"/>
    <property type="project" value="GO_Central"/>
</dbReference>
<dbReference type="FunFam" id="2.60.40.10:FF:001361">
    <property type="entry name" value="T-cell surface glycoprotein CD3 delta chain"/>
    <property type="match status" value="1"/>
</dbReference>
<dbReference type="Gene3D" id="2.60.40.10">
    <property type="entry name" value="Immunoglobulins"/>
    <property type="match status" value="1"/>
</dbReference>
<dbReference type="Gene3D" id="1.10.287.770">
    <property type="entry name" value="YojJ-like"/>
    <property type="match status" value="1"/>
</dbReference>
<dbReference type="InterPro" id="IPR015484">
    <property type="entry name" value="CD3_esu/gsu/dsu"/>
</dbReference>
<dbReference type="InterPro" id="IPR036179">
    <property type="entry name" value="Ig-like_dom_sf"/>
</dbReference>
<dbReference type="InterPro" id="IPR013783">
    <property type="entry name" value="Ig-like_fold"/>
</dbReference>
<dbReference type="InterPro" id="IPR032052">
    <property type="entry name" value="Ig_4"/>
</dbReference>
<dbReference type="InterPro" id="IPR003110">
    <property type="entry name" value="Phos_immunorcpt_sig_ITAM"/>
</dbReference>
<dbReference type="PANTHER" id="PTHR10570:SF5">
    <property type="entry name" value="T-CELL SURFACE GLYCOPROTEIN CD3 DELTA CHAIN"/>
    <property type="match status" value="1"/>
</dbReference>
<dbReference type="PANTHER" id="PTHR10570">
    <property type="entry name" value="T-CELL SURFACE GLYCOPROTEIN CD3 GAMMA CHAIN / DELTA CHAIN"/>
    <property type="match status" value="1"/>
</dbReference>
<dbReference type="Pfam" id="PF16680">
    <property type="entry name" value="Ig_4"/>
    <property type="match status" value="1"/>
</dbReference>
<dbReference type="Pfam" id="PF02189">
    <property type="entry name" value="ITAM"/>
    <property type="match status" value="1"/>
</dbReference>
<dbReference type="SMART" id="SM00077">
    <property type="entry name" value="ITAM"/>
    <property type="match status" value="1"/>
</dbReference>
<dbReference type="SUPFAM" id="SSF48726">
    <property type="entry name" value="Immunoglobulin"/>
    <property type="match status" value="1"/>
</dbReference>
<dbReference type="PROSITE" id="PS51055">
    <property type="entry name" value="ITAM_1"/>
    <property type="match status" value="1"/>
</dbReference>